<reference key="1">
    <citation type="journal article" date="2011" name="Proc. Natl. Acad. Sci. U.S.A.">
        <title>Genomic anatomy of Escherichia coli O157:H7 outbreaks.</title>
        <authorList>
            <person name="Eppinger M."/>
            <person name="Mammel M.K."/>
            <person name="Leclerc J.E."/>
            <person name="Ravel J."/>
            <person name="Cebula T.A."/>
        </authorList>
    </citation>
    <scope>NUCLEOTIDE SEQUENCE [LARGE SCALE GENOMIC DNA]</scope>
    <source>
        <strain>EC4115 / EHEC</strain>
    </source>
</reference>
<proteinExistence type="inferred from homology"/>
<feature type="chain" id="PRO_1000127003" description="Peptidase B">
    <location>
        <begin position="1"/>
        <end position="427"/>
    </location>
</feature>
<feature type="active site" evidence="1">
    <location>
        <position position="207"/>
    </location>
</feature>
<feature type="active site" evidence="1">
    <location>
        <position position="281"/>
    </location>
</feature>
<feature type="binding site" evidence="1">
    <location>
        <position position="195"/>
    </location>
    <ligand>
        <name>Mn(2+)</name>
        <dbReference type="ChEBI" id="CHEBI:29035"/>
        <label>2</label>
    </ligand>
</feature>
<feature type="binding site" evidence="1">
    <location>
        <position position="200"/>
    </location>
    <ligand>
        <name>Mn(2+)</name>
        <dbReference type="ChEBI" id="CHEBI:29035"/>
        <label>1</label>
    </ligand>
</feature>
<feature type="binding site" evidence="1">
    <location>
        <position position="200"/>
    </location>
    <ligand>
        <name>Mn(2+)</name>
        <dbReference type="ChEBI" id="CHEBI:29035"/>
        <label>2</label>
    </ligand>
</feature>
<feature type="binding site" evidence="1">
    <location>
        <position position="218"/>
    </location>
    <ligand>
        <name>Mn(2+)</name>
        <dbReference type="ChEBI" id="CHEBI:29035"/>
        <label>2</label>
    </ligand>
</feature>
<feature type="binding site" evidence="1">
    <location>
        <position position="277"/>
    </location>
    <ligand>
        <name>Mn(2+)</name>
        <dbReference type="ChEBI" id="CHEBI:29035"/>
        <label>1</label>
    </ligand>
</feature>
<feature type="binding site" evidence="1">
    <location>
        <position position="279"/>
    </location>
    <ligand>
        <name>Mn(2+)</name>
        <dbReference type="ChEBI" id="CHEBI:29035"/>
        <label>1</label>
    </ligand>
</feature>
<feature type="binding site" evidence="1">
    <location>
        <position position="279"/>
    </location>
    <ligand>
        <name>Mn(2+)</name>
        <dbReference type="ChEBI" id="CHEBI:29035"/>
        <label>2</label>
    </ligand>
</feature>
<accession>B5Z0Z6</accession>
<evidence type="ECO:0000255" key="1">
    <source>
        <dbReference type="HAMAP-Rule" id="MF_00504"/>
    </source>
</evidence>
<sequence>MTEAMKITLSTQPADARWGEKATYSINNDGITLHLNGADDLGLIQRAARKIDGLGIKHVQLSGEGWDADRCWAFWQGYKAPKGTRKVEWPDLDDAQRQELDNRLMIIDWVRDTINAPAEELGPSQLAQRAVDLISNVASDRVTYRITKGEDLREQGYMGLHTVGRGSERSPVLLALDYNPTGDKEAPVYACLVGKGITFDSGGYSIKQTAFMDSMKSDMGGAATVTGALAFAITRGLNKRVKLFLCCADNLISGNAFKLGDIITYRNGKKVEVMNTDAEGRLVLADGLIDASAQKPEMIIDAATLTGAAKTALGNDYHALFSFDDALAGRLLASASQENEPFWRLPLAEFHRSQLPSNFAELNNTGSAAYPAGASTAAGFLSHFVENYQQGWLHIDCSATYRKAPVEQWSAGATGLGVRTIANLLTA</sequence>
<keyword id="KW-0031">Aminopeptidase</keyword>
<keyword id="KW-0963">Cytoplasm</keyword>
<keyword id="KW-0378">Hydrolase</keyword>
<keyword id="KW-0464">Manganese</keyword>
<keyword id="KW-0479">Metal-binding</keyword>
<keyword id="KW-0645">Protease</keyword>
<protein>
    <recommendedName>
        <fullName evidence="1">Peptidase B</fullName>
        <ecNumber evidence="1">3.4.11.23</ecNumber>
    </recommendedName>
    <alternativeName>
        <fullName evidence="1">Aminopeptidase B</fullName>
    </alternativeName>
</protein>
<organism>
    <name type="scientific">Escherichia coli O157:H7 (strain EC4115 / EHEC)</name>
    <dbReference type="NCBI Taxonomy" id="444450"/>
    <lineage>
        <taxon>Bacteria</taxon>
        <taxon>Pseudomonadati</taxon>
        <taxon>Pseudomonadota</taxon>
        <taxon>Gammaproteobacteria</taxon>
        <taxon>Enterobacterales</taxon>
        <taxon>Enterobacteriaceae</taxon>
        <taxon>Escherichia</taxon>
    </lineage>
</organism>
<comment type="function">
    <text evidence="1">Probably plays an important role in intracellular peptide degradation.</text>
</comment>
<comment type="catalytic activity">
    <reaction evidence="1">
        <text>Release of an N-terminal amino acid, Xaa, from a peptide or arylamide. Xaa is preferably Glu or Asp but may be other amino acids, including Leu, Met, His, Cys and Gln.</text>
        <dbReference type="EC" id="3.4.11.23"/>
    </reaction>
</comment>
<comment type="cofactor">
    <cofactor evidence="1">
        <name>Mn(2+)</name>
        <dbReference type="ChEBI" id="CHEBI:29035"/>
    </cofactor>
    <text evidence="1">Binds 2 manganese ions per subunit.</text>
</comment>
<comment type="subunit">
    <text evidence="1">Homohexamer.</text>
</comment>
<comment type="subcellular location">
    <subcellularLocation>
        <location evidence="1">Cytoplasm</location>
    </subcellularLocation>
</comment>
<comment type="similarity">
    <text evidence="1">Belongs to the peptidase M17 family.</text>
</comment>
<dbReference type="EC" id="3.4.11.23" evidence="1"/>
<dbReference type="EMBL" id="CP001164">
    <property type="protein sequence ID" value="ACI35033.1"/>
    <property type="molecule type" value="Genomic_DNA"/>
</dbReference>
<dbReference type="RefSeq" id="WP_000133587.1">
    <property type="nucleotide sequence ID" value="NC_011353.1"/>
</dbReference>
<dbReference type="SMR" id="B5Z0Z6"/>
<dbReference type="MEROPS" id="M17.004"/>
<dbReference type="KEGG" id="ecf:ECH74115_3754"/>
<dbReference type="HOGENOM" id="CLU_013734_7_1_6"/>
<dbReference type="GO" id="GO:0005737">
    <property type="term" value="C:cytoplasm"/>
    <property type="evidence" value="ECO:0007669"/>
    <property type="project" value="UniProtKB-SubCell"/>
</dbReference>
<dbReference type="GO" id="GO:0030145">
    <property type="term" value="F:manganese ion binding"/>
    <property type="evidence" value="ECO:0007669"/>
    <property type="project" value="UniProtKB-UniRule"/>
</dbReference>
<dbReference type="GO" id="GO:0070006">
    <property type="term" value="F:metalloaminopeptidase activity"/>
    <property type="evidence" value="ECO:0007669"/>
    <property type="project" value="InterPro"/>
</dbReference>
<dbReference type="GO" id="GO:0006508">
    <property type="term" value="P:proteolysis"/>
    <property type="evidence" value="ECO:0007669"/>
    <property type="project" value="UniProtKB-UniRule"/>
</dbReference>
<dbReference type="CDD" id="cd00433">
    <property type="entry name" value="Peptidase_M17"/>
    <property type="match status" value="1"/>
</dbReference>
<dbReference type="FunFam" id="3.40.630.10:FF:000037">
    <property type="entry name" value="Peptidase B"/>
    <property type="match status" value="1"/>
</dbReference>
<dbReference type="Gene3D" id="3.40.630.10">
    <property type="entry name" value="Zn peptidases"/>
    <property type="match status" value="1"/>
</dbReference>
<dbReference type="HAMAP" id="MF_00504">
    <property type="entry name" value="Aminopeptidase_M17"/>
    <property type="match status" value="1"/>
</dbReference>
<dbReference type="InterPro" id="IPR011356">
    <property type="entry name" value="Leucine_aapep/pepB"/>
</dbReference>
<dbReference type="InterPro" id="IPR047620">
    <property type="entry name" value="M17_PepB-like_N"/>
</dbReference>
<dbReference type="InterPro" id="IPR008330">
    <property type="entry name" value="Pept_M17_PepB"/>
</dbReference>
<dbReference type="InterPro" id="IPR000819">
    <property type="entry name" value="Peptidase_M17_C"/>
</dbReference>
<dbReference type="NCBIfam" id="NF003450">
    <property type="entry name" value="PRK05015.1"/>
    <property type="match status" value="1"/>
</dbReference>
<dbReference type="PANTHER" id="PTHR11963">
    <property type="entry name" value="LEUCINE AMINOPEPTIDASE-RELATED"/>
    <property type="match status" value="1"/>
</dbReference>
<dbReference type="PANTHER" id="PTHR11963:SF20">
    <property type="entry name" value="PEPTIDASE B"/>
    <property type="match status" value="1"/>
</dbReference>
<dbReference type="Pfam" id="PF12404">
    <property type="entry name" value="DUF3663"/>
    <property type="match status" value="1"/>
</dbReference>
<dbReference type="Pfam" id="PF00883">
    <property type="entry name" value="Peptidase_M17"/>
    <property type="match status" value="1"/>
</dbReference>
<dbReference type="PIRSF" id="PIRSF036388">
    <property type="entry name" value="Ctsl_amnpptdse_B"/>
    <property type="match status" value="1"/>
</dbReference>
<dbReference type="PRINTS" id="PR00481">
    <property type="entry name" value="LAMNOPPTDASE"/>
</dbReference>
<dbReference type="SUPFAM" id="SSF53187">
    <property type="entry name" value="Zn-dependent exopeptidases"/>
    <property type="match status" value="1"/>
</dbReference>
<dbReference type="PROSITE" id="PS00631">
    <property type="entry name" value="CYTOSOL_AP"/>
    <property type="match status" value="1"/>
</dbReference>
<name>PEPB_ECO5E</name>
<gene>
    <name evidence="1" type="primary">pepB</name>
    <name type="ordered locus">ECH74115_3754</name>
</gene>